<protein>
    <recommendedName>
        <fullName evidence="7">Coiled-coil domain-containing protein 57</fullName>
    </recommendedName>
</protein>
<evidence type="ECO:0000255" key="1"/>
<evidence type="ECO:0000256" key="2">
    <source>
        <dbReference type="SAM" id="MobiDB-lite"/>
    </source>
</evidence>
<evidence type="ECO:0000269" key="3">
    <source>
    </source>
</evidence>
<evidence type="ECO:0000269" key="4">
    <source>
    </source>
</evidence>
<evidence type="ECO:0000303" key="5">
    <source>
    </source>
</evidence>
<evidence type="ECO:0000303" key="6">
    <source>
    </source>
</evidence>
<evidence type="ECO:0000305" key="7"/>
<evidence type="ECO:0000312" key="8">
    <source>
        <dbReference type="HGNC" id="HGNC:27564"/>
    </source>
</evidence>
<reference key="1">
    <citation type="journal article" date="2006" name="Nature">
        <title>DNA sequence of human chromosome 17 and analysis of rearrangement in the human lineage.</title>
        <authorList>
            <person name="Zody M.C."/>
            <person name="Garber M."/>
            <person name="Adams D.J."/>
            <person name="Sharpe T."/>
            <person name="Harrow J."/>
            <person name="Lupski J.R."/>
            <person name="Nicholson C."/>
            <person name="Searle S.M."/>
            <person name="Wilming L."/>
            <person name="Young S.K."/>
            <person name="Abouelleil A."/>
            <person name="Allen N.R."/>
            <person name="Bi W."/>
            <person name="Bloom T."/>
            <person name="Borowsky M.L."/>
            <person name="Bugalter B.E."/>
            <person name="Butler J."/>
            <person name="Chang J.L."/>
            <person name="Chen C.-K."/>
            <person name="Cook A."/>
            <person name="Corum B."/>
            <person name="Cuomo C.A."/>
            <person name="de Jong P.J."/>
            <person name="DeCaprio D."/>
            <person name="Dewar K."/>
            <person name="FitzGerald M."/>
            <person name="Gilbert J."/>
            <person name="Gibson R."/>
            <person name="Gnerre S."/>
            <person name="Goldstein S."/>
            <person name="Grafham D.V."/>
            <person name="Grocock R."/>
            <person name="Hafez N."/>
            <person name="Hagopian D.S."/>
            <person name="Hart E."/>
            <person name="Norman C.H."/>
            <person name="Humphray S."/>
            <person name="Jaffe D.B."/>
            <person name="Jones M."/>
            <person name="Kamal M."/>
            <person name="Khodiyar V.K."/>
            <person name="LaButti K."/>
            <person name="Laird G."/>
            <person name="Lehoczky J."/>
            <person name="Liu X."/>
            <person name="Lokyitsang T."/>
            <person name="Loveland J."/>
            <person name="Lui A."/>
            <person name="Macdonald P."/>
            <person name="Major J.E."/>
            <person name="Matthews L."/>
            <person name="Mauceli E."/>
            <person name="McCarroll S.A."/>
            <person name="Mihalev A.H."/>
            <person name="Mudge J."/>
            <person name="Nguyen C."/>
            <person name="Nicol R."/>
            <person name="O'Leary S.B."/>
            <person name="Osoegawa K."/>
            <person name="Schwartz D.C."/>
            <person name="Shaw-Smith C."/>
            <person name="Stankiewicz P."/>
            <person name="Steward C."/>
            <person name="Swarbreck D."/>
            <person name="Venkataraman V."/>
            <person name="Whittaker C.A."/>
            <person name="Yang X."/>
            <person name="Zimmer A.R."/>
            <person name="Bradley A."/>
            <person name="Hubbard T."/>
            <person name="Birren B.W."/>
            <person name="Rogers J."/>
            <person name="Lander E.S."/>
            <person name="Nusbaum C."/>
        </authorList>
    </citation>
    <scope>NUCLEOTIDE SEQUENCE [LARGE SCALE GENOMIC DNA]</scope>
</reference>
<reference key="2">
    <citation type="submission" date="2005-07" db="EMBL/GenBank/DDBJ databases">
        <authorList>
            <person name="Mural R.J."/>
            <person name="Istrail S."/>
            <person name="Sutton G.G."/>
            <person name="Florea L."/>
            <person name="Halpern A.L."/>
            <person name="Mobarry C.M."/>
            <person name="Lippert R."/>
            <person name="Walenz B."/>
            <person name="Shatkay H."/>
            <person name="Dew I."/>
            <person name="Miller J.R."/>
            <person name="Flanigan M.J."/>
            <person name="Edwards N.J."/>
            <person name="Bolanos R."/>
            <person name="Fasulo D."/>
            <person name="Halldorsson B.V."/>
            <person name="Hannenhalli S."/>
            <person name="Turner R."/>
            <person name="Yooseph S."/>
            <person name="Lu F."/>
            <person name="Nusskern D.R."/>
            <person name="Shue B.C."/>
            <person name="Zheng X.H."/>
            <person name="Zhong F."/>
            <person name="Delcher A.L."/>
            <person name="Huson D.H."/>
            <person name="Kravitz S.A."/>
            <person name="Mouchard L."/>
            <person name="Reinert K."/>
            <person name="Remington K.A."/>
            <person name="Clark A.G."/>
            <person name="Waterman M.S."/>
            <person name="Eichler E.E."/>
            <person name="Adams M.D."/>
            <person name="Hunkapiller M.W."/>
            <person name="Myers E.W."/>
            <person name="Venter J.C."/>
        </authorList>
    </citation>
    <scope>NUCLEOTIDE SEQUENCE [LARGE SCALE GENOMIC DNA]</scope>
</reference>
<reference key="3">
    <citation type="journal article" date="2004" name="Genome Res.">
        <title>The status, quality, and expansion of the NIH full-length cDNA project: the Mammalian Gene Collection (MGC).</title>
        <authorList>
            <consortium name="The MGC Project Team"/>
        </authorList>
    </citation>
    <scope>NUCLEOTIDE SEQUENCE [LARGE SCALE MRNA] (ISOFORMS 1 AND 2)</scope>
    <scope>VARIANT MET-480</scope>
    <source>
        <tissue>Brain</tissue>
        <tissue>Ovary</tissue>
    </source>
</reference>
<reference key="4">
    <citation type="journal article" date="2003" name="DNA Res.">
        <title>Characterization of long cDNA clones from human adult spleen. II. The complete sequences of 81 cDNA clones.</title>
        <authorList>
            <person name="Jikuya H."/>
            <person name="Takano J."/>
            <person name="Kikuno R."/>
            <person name="Hirosawa M."/>
            <person name="Nagase T."/>
            <person name="Nomura N."/>
            <person name="Ohara O."/>
        </authorList>
    </citation>
    <scope>NUCLEOTIDE SEQUENCE [LARGE SCALE MRNA] OF 458-915 (ISOFORM 2)</scope>
    <source>
        <tissue>Spleen</tissue>
    </source>
</reference>
<reference key="5">
    <citation type="journal article" date="2020" name="Cell Rep.">
        <title>CCDC57 Cooperates with Microtubules and Microcephaly Protein CEP63 and Regulates Centriole Duplication and Mitotic Progression.</title>
        <authorList>
            <person name="Gurkaslar H.K."/>
            <person name="Culfa E."/>
            <person name="Arslanhan M.D."/>
            <person name="Lince-Faria M."/>
            <person name="Firat-Karalar E.N."/>
        </authorList>
    </citation>
    <scope>FUNCTION</scope>
    <scope>SUBCELLULAR LOCATION</scope>
    <scope>INTERACTION WITH CEP63</scope>
</reference>
<sequence>MLPLGSEPALNELLLRKEEEWRALQAHRTQLQEAALQDTRSQLEEAQGKLRCLQEDFVYNLQVLEERDLELERYDAAFAQAREWEEARRAEVSELKIEAAKLRQALAREARKVEELQQQQQLAFQEHRLELERVHSDKNGEIDHHREQYENLKWTLERKLEELDGELALQRQELLLEFESKMRKREHEFRLQADNMSNTALSRELKVKLLHKELEALKEAGAKAAESLQRAEATNAELERKLQSRAGELQDLEAMSRARVKDLEDKLHSVQLTRKKEEETFKRKHEELDRLAREKDAVLVAVKGAHVEQLQELQTRVLELQAHCETLEAQLRRAEWRQADTAKEKDAAIDQLREDASTVKSAWDAQIAQLSKEMVSRDLQIQTLQEEEVKLKAQVARSQQDIERYKQQLSLAVERERSLERDQVQLGLDWQRRCDDIERDQIQKSEALIQGLSMAKSQVAAKLQETEQALQEQEVVLKAVTLERDQAVQALRMHGLPRPGAQMLLRQHEEEISKDFPSSEIQRLREQNTSLRNAIAQMRKEMEALSHQIPPPIQTAAESTDANQPDPEAGGDAATPDYVLALEAEIRTLKHKFKTLEKHLEDVLDPLKMSSPHAESQPSVRTSTETTGGSAQAGQAGGSVQAGQAGGSVQAGPVSSGLALRKLGDRVQLLNLLVTRLRQKVLREPLEPAALQRELPREVDQVHLEVLELRKQVAELGKHLRIAQHGGAEPSGRKQPPASDAVALGREDAKSAEDEAPSRHLGKHQPRSAQVGSRLDALQGPKTQHSIHTVTCKSPRQKEDRSPKPPQAPQHPEEHGRQSHSSSSFASGTLQDMWRLLDLGSSPSGVTSQGDSTPELPAPPAADRRPVKMQAGIATPGMKTAAQAKAKTTGASRSHPAKAKGCQRPPKIRNYNIMD</sequence>
<keyword id="KW-0025">Alternative splicing</keyword>
<keyword id="KW-0175">Coiled coil</keyword>
<keyword id="KW-0963">Cytoplasm</keyword>
<keyword id="KW-0206">Cytoskeleton</keyword>
<keyword id="KW-1267">Proteomics identification</keyword>
<keyword id="KW-1185">Reference proteome</keyword>
<name>CCD57_HUMAN</name>
<dbReference type="EMBL" id="AC129510">
    <property type="status" value="NOT_ANNOTATED_CDS"/>
    <property type="molecule type" value="Genomic_DNA"/>
</dbReference>
<dbReference type="EMBL" id="AC132872">
    <property type="status" value="NOT_ANNOTATED_CDS"/>
    <property type="molecule type" value="Genomic_DNA"/>
</dbReference>
<dbReference type="EMBL" id="AC135056">
    <property type="status" value="NOT_ANNOTATED_CDS"/>
    <property type="molecule type" value="Genomic_DNA"/>
</dbReference>
<dbReference type="EMBL" id="CH471099">
    <property type="protein sequence ID" value="EAW89746.1"/>
    <property type="status" value="ALT_SEQ"/>
    <property type="molecule type" value="Genomic_DNA"/>
</dbReference>
<dbReference type="EMBL" id="BC040264">
    <property type="protein sequence ID" value="AAH40264.1"/>
    <property type="molecule type" value="mRNA"/>
</dbReference>
<dbReference type="EMBL" id="BC110997">
    <property type="protein sequence ID" value="AAI10998.1"/>
    <property type="status" value="ALT_SEQ"/>
    <property type="molecule type" value="mRNA"/>
</dbReference>
<dbReference type="EMBL" id="AK074059">
    <property type="protein sequence ID" value="BAB84885.1"/>
    <property type="molecule type" value="mRNA"/>
</dbReference>
<dbReference type="CCDS" id="CCDS11803.1">
    <molecule id="Q2TAC2-2"/>
</dbReference>
<dbReference type="CCDS" id="CCDS92419.1">
    <molecule id="Q2TAC2-1"/>
</dbReference>
<dbReference type="RefSeq" id="NP_001303250.1">
    <molecule id="Q2TAC2-2"/>
    <property type="nucleotide sequence ID" value="NM_001316321.3"/>
</dbReference>
<dbReference type="RefSeq" id="NP_932348.2">
    <molecule id="Q2TAC2-1"/>
    <property type="nucleotide sequence ID" value="NM_198082.4"/>
</dbReference>
<dbReference type="SMR" id="Q2TAC2"/>
<dbReference type="BioGRID" id="129725">
    <property type="interactions" value="171"/>
</dbReference>
<dbReference type="FunCoup" id="Q2TAC2">
    <property type="interactions" value="299"/>
</dbReference>
<dbReference type="IntAct" id="Q2TAC2">
    <property type="interactions" value="154"/>
</dbReference>
<dbReference type="STRING" id="9606.ENSP00000376154"/>
<dbReference type="GlyCosmos" id="Q2TAC2">
    <property type="glycosylation" value="2 sites, 1 glycan"/>
</dbReference>
<dbReference type="GlyGen" id="Q2TAC2">
    <property type="glycosylation" value="4 sites, 1 O-linked glycan (3 sites)"/>
</dbReference>
<dbReference type="iPTMnet" id="Q2TAC2"/>
<dbReference type="PhosphoSitePlus" id="Q2TAC2"/>
<dbReference type="BioMuta" id="CCDC57"/>
<dbReference type="DMDM" id="317373337"/>
<dbReference type="jPOST" id="Q2TAC2"/>
<dbReference type="MassIVE" id="Q2TAC2"/>
<dbReference type="PaxDb" id="9606-ENSP00000374292"/>
<dbReference type="PeptideAtlas" id="Q2TAC2"/>
<dbReference type="ProteomicsDB" id="61457">
    <molecule id="Q2TAC2-1"/>
</dbReference>
<dbReference type="ProteomicsDB" id="61458">
    <molecule id="Q2TAC2-2"/>
</dbReference>
<dbReference type="TopDownProteomics" id="Q2TAC2-1">
    <molecule id="Q2TAC2-1"/>
</dbReference>
<dbReference type="Antibodypedia" id="19887">
    <property type="antibodies" value="56 antibodies from 10 providers"/>
</dbReference>
<dbReference type="DNASU" id="284001"/>
<dbReference type="Ensembl" id="ENST00000389641.9">
    <molecule id="Q2TAC2-1"/>
    <property type="protein sequence ID" value="ENSP00000374292.5"/>
    <property type="gene ID" value="ENSG00000176155.21"/>
</dbReference>
<dbReference type="Ensembl" id="ENST00000392343.3">
    <molecule id="Q2TAC2-2"/>
    <property type="protein sequence ID" value="ENSP00000376154.3"/>
    <property type="gene ID" value="ENSG00000176155.21"/>
</dbReference>
<dbReference type="GeneID" id="284001"/>
<dbReference type="KEGG" id="hsa:284001"/>
<dbReference type="UCSC" id="uc002kdz.2">
    <molecule id="Q2TAC2-1"/>
    <property type="organism name" value="human"/>
</dbReference>
<dbReference type="AGR" id="HGNC:27564"/>
<dbReference type="CTD" id="284001"/>
<dbReference type="DisGeNET" id="284001"/>
<dbReference type="GeneCards" id="CCDC57"/>
<dbReference type="HGNC" id="HGNC:27564">
    <property type="gene designation" value="CCDC57"/>
</dbReference>
<dbReference type="HPA" id="ENSG00000176155">
    <property type="expression patterns" value="Low tissue specificity"/>
</dbReference>
<dbReference type="neXtProt" id="NX_Q2TAC2"/>
<dbReference type="OpenTargets" id="ENSG00000176155"/>
<dbReference type="PharmGKB" id="PA142672173"/>
<dbReference type="VEuPathDB" id="HostDB:ENSG00000176155"/>
<dbReference type="eggNOG" id="ENOG502QSW3">
    <property type="taxonomic scope" value="Eukaryota"/>
</dbReference>
<dbReference type="GeneTree" id="ENSGT00940000153251"/>
<dbReference type="HOGENOM" id="CLU_011424_1_0_1"/>
<dbReference type="InParanoid" id="Q2TAC2"/>
<dbReference type="OrthoDB" id="568502at2759"/>
<dbReference type="PAN-GO" id="Q2TAC2">
    <property type="GO annotations" value="7 GO annotations based on evolutionary models"/>
</dbReference>
<dbReference type="PhylomeDB" id="Q2TAC2"/>
<dbReference type="TreeFam" id="TF333001"/>
<dbReference type="PathwayCommons" id="Q2TAC2"/>
<dbReference type="SignaLink" id="Q2TAC2"/>
<dbReference type="BioGRID-ORCS" id="284001">
    <property type="hits" value="9 hits in 318 CRISPR screens"/>
</dbReference>
<dbReference type="ChiTaRS" id="CCDC57">
    <property type="organism name" value="human"/>
</dbReference>
<dbReference type="GeneWiki" id="CCDC57"/>
<dbReference type="GenomeRNAi" id="284001"/>
<dbReference type="Pharos" id="Q2TAC2">
    <property type="development level" value="Tdark"/>
</dbReference>
<dbReference type="PRO" id="PR:Q2TAC2"/>
<dbReference type="Proteomes" id="UP000005640">
    <property type="component" value="Chromosome 17"/>
</dbReference>
<dbReference type="RNAct" id="Q2TAC2">
    <property type="molecule type" value="protein"/>
</dbReference>
<dbReference type="Bgee" id="ENSG00000176155">
    <property type="expression patterns" value="Expressed in right uterine tube and 130 other cell types or tissues"/>
</dbReference>
<dbReference type="ExpressionAtlas" id="Q2TAC2">
    <property type="expression patterns" value="baseline and differential"/>
</dbReference>
<dbReference type="GO" id="GO:0034451">
    <property type="term" value="C:centriolar satellite"/>
    <property type="evidence" value="ECO:0000314"/>
    <property type="project" value="UniProtKB"/>
</dbReference>
<dbReference type="GO" id="GO:0005814">
    <property type="term" value="C:centriole"/>
    <property type="evidence" value="ECO:0000314"/>
    <property type="project" value="UniProtKB"/>
</dbReference>
<dbReference type="GO" id="GO:0005813">
    <property type="term" value="C:centrosome"/>
    <property type="evidence" value="ECO:0000314"/>
    <property type="project" value="UniProtKB"/>
</dbReference>
<dbReference type="GO" id="GO:0005737">
    <property type="term" value="C:cytoplasm"/>
    <property type="evidence" value="ECO:0007669"/>
    <property type="project" value="UniProtKB-KW"/>
</dbReference>
<dbReference type="GO" id="GO:0005876">
    <property type="term" value="C:spindle microtubule"/>
    <property type="evidence" value="ECO:0000314"/>
    <property type="project" value="UniProtKB"/>
</dbReference>
<dbReference type="GO" id="GO:0007099">
    <property type="term" value="P:centriole replication"/>
    <property type="evidence" value="ECO:0000314"/>
    <property type="project" value="UniProtKB"/>
</dbReference>
<dbReference type="GO" id="GO:0060271">
    <property type="term" value="P:cilium assembly"/>
    <property type="evidence" value="ECO:0000314"/>
    <property type="project" value="UniProtKB"/>
</dbReference>
<dbReference type="GO" id="GO:0000086">
    <property type="term" value="P:G2/M transition of mitotic cell cycle"/>
    <property type="evidence" value="ECO:0000314"/>
    <property type="project" value="UniProtKB"/>
</dbReference>
<dbReference type="GO" id="GO:0007020">
    <property type="term" value="P:microtubule nucleation"/>
    <property type="evidence" value="ECO:0000314"/>
    <property type="project" value="UniProtKB"/>
</dbReference>
<dbReference type="GO" id="GO:0045931">
    <property type="term" value="P:positive regulation of mitotic cell cycle"/>
    <property type="evidence" value="ECO:0000314"/>
    <property type="project" value="UniProtKB"/>
</dbReference>
<dbReference type="InterPro" id="IPR042481">
    <property type="entry name" value="CCDC57"/>
</dbReference>
<dbReference type="PANTHER" id="PTHR46725">
    <property type="entry name" value="COILED-COIL DOMAIN-CONTAINING PROTEIN 57"/>
    <property type="match status" value="1"/>
</dbReference>
<dbReference type="PANTHER" id="PTHR46725:SF1">
    <property type="entry name" value="COILED-COIL DOMAIN-CONTAINING PROTEIN 57"/>
    <property type="match status" value="1"/>
</dbReference>
<gene>
    <name evidence="8" type="primary">CCDC57</name>
</gene>
<proteinExistence type="evidence at protein level"/>
<feature type="chain" id="PRO_0000288871" description="Coiled-coil domain-containing protein 57">
    <location>
        <begin position="1"/>
        <end position="915"/>
    </location>
</feature>
<feature type="region of interest" description="Centrosomal targeting domain" evidence="4">
    <location>
        <begin position="1"/>
        <end position="502"/>
    </location>
</feature>
<feature type="region of interest" description="Disordered" evidence="2">
    <location>
        <begin position="555"/>
        <end position="574"/>
    </location>
</feature>
<feature type="region of interest" description="Microtubule binding domain" evidence="4">
    <location>
        <begin position="606"/>
        <end position="915"/>
    </location>
</feature>
<feature type="region of interest" description="Disordered" evidence="2">
    <location>
        <begin position="606"/>
        <end position="653"/>
    </location>
</feature>
<feature type="region of interest" description="Disordered" evidence="2">
    <location>
        <begin position="724"/>
        <end position="915"/>
    </location>
</feature>
<feature type="coiled-coil region" evidence="1">
    <location>
        <begin position="92"/>
        <end position="173"/>
    </location>
</feature>
<feature type="coiled-coil region" evidence="1">
    <location>
        <begin position="214"/>
        <end position="422"/>
    </location>
</feature>
<feature type="coiled-coil region" evidence="1">
    <location>
        <begin position="456"/>
        <end position="483"/>
    </location>
</feature>
<feature type="coiled-coil region" evidence="1">
    <location>
        <begin position="521"/>
        <end position="548"/>
    </location>
</feature>
<feature type="compositionally biased region" description="Polar residues" evidence="2">
    <location>
        <begin position="613"/>
        <end position="627"/>
    </location>
</feature>
<feature type="compositionally biased region" description="Low complexity" evidence="2">
    <location>
        <begin position="628"/>
        <end position="652"/>
    </location>
</feature>
<feature type="compositionally biased region" description="Basic and acidic residues" evidence="2">
    <location>
        <begin position="745"/>
        <end position="758"/>
    </location>
</feature>
<feature type="compositionally biased region" description="Polar residues" evidence="2">
    <location>
        <begin position="781"/>
        <end position="794"/>
    </location>
</feature>
<feature type="compositionally biased region" description="Polar residues" evidence="2">
    <location>
        <begin position="819"/>
        <end position="830"/>
    </location>
</feature>
<feature type="compositionally biased region" description="Polar residues" evidence="2">
    <location>
        <begin position="841"/>
        <end position="852"/>
    </location>
</feature>
<feature type="compositionally biased region" description="Low complexity" evidence="2">
    <location>
        <begin position="879"/>
        <end position="891"/>
    </location>
</feature>
<feature type="splice variant" id="VSP_025802" description="In isoform 2." evidence="5 6">
    <original>DAKS</original>
    <variation>VGAR</variation>
    <location>
        <begin position="748"/>
        <end position="751"/>
    </location>
</feature>
<feature type="splice variant" id="VSP_025803" description="In isoform 2." evidence="5 6">
    <location>
        <begin position="752"/>
        <end position="915"/>
    </location>
</feature>
<feature type="sequence variant" id="VAR_032516" description="In dbSNP:rs34543170.">
    <original>E</original>
    <variation>Q</variation>
    <location>
        <position position="237"/>
    </location>
</feature>
<feature type="sequence variant" id="VAR_032517" description="In dbSNP:rs7406116.">
    <original>Q</original>
    <variation>R</variation>
    <location>
        <position position="321"/>
    </location>
</feature>
<feature type="sequence variant" id="VAR_032518" description="In dbSNP:rs7209474." evidence="3">
    <original>V</original>
    <variation>M</variation>
    <location>
        <position position="480"/>
    </location>
</feature>
<feature type="sequence variant" id="VAR_032519" description="In dbSNP:rs4625783.">
    <original>R</original>
    <variation>G</variation>
    <location>
        <position position="774"/>
    </location>
</feature>
<feature type="sequence variant" id="VAR_032520" description="In dbSNP:rs7406163.">
    <original>D</original>
    <variation>N</variation>
    <location>
        <position position="776"/>
    </location>
</feature>
<feature type="sequence variant" id="VAR_032521" description="In dbSNP:rs7406162.">
    <original>A</original>
    <variation>T</variation>
    <location>
        <position position="777"/>
    </location>
</feature>
<feature type="sequence variant" id="VAR_032522" description="In dbSNP:rs7213172.">
    <original>Q</original>
    <variation>K</variation>
    <location>
        <position position="810"/>
    </location>
</feature>
<feature type="sequence variant" id="VAR_032523" description="In dbSNP:rs11077969.">
    <original>M</original>
    <variation>T</variation>
    <location>
        <position position="833"/>
    </location>
</feature>
<feature type="sequence conflict" description="In Ref. 4; BAB84885." evidence="7" ref="4">
    <original>Q</original>
    <variation>K</variation>
    <location>
        <position position="458"/>
    </location>
</feature>
<accession>Q2TAC2</accession>
<accession>A6NP51</accession>
<accession>A8MQC7</accession>
<accession>Q8IWG2</accession>
<accession>Q8TER3</accession>
<comment type="function">
    <text evidence="4">Pleiotropic regulator of centriole duplication, mitosis, and ciliogenesis. Critical interface between centrosome and microtubule-mediated cellular processes. Centriole duplication protein required for recruitment of CEP63, CEP152, and PLK4 to the centrosome. Independent of its centrosomal targeting, localizes to and interacts with microtubules and regulates microtubule nucleation, stability, and mitotic progression.</text>
</comment>
<comment type="subunit">
    <text evidence="4">Interacts with CEP63; the interaction is required for their location to proximal end of centrioles (PubMed:32402286). Interacts with microtubules (PubMed:32402286).</text>
</comment>
<comment type="interaction">
    <interactant intactId="EBI-2808286">
        <id>Q2TAC2</id>
    </interactant>
    <interactant intactId="EBI-745213">
        <id>P29972</id>
        <label>AQP1</label>
    </interactant>
    <organismsDiffer>false</organismsDiffer>
    <experiments>3</experiments>
</comment>
<comment type="interaction">
    <interactant intactId="EBI-2808286">
        <id>Q2TAC2</id>
    </interactant>
    <interactant intactId="EBI-2875746">
        <id>P40617</id>
        <label>ARL4A</label>
    </interactant>
    <organismsDiffer>false</organismsDiffer>
    <experiments>3</experiments>
</comment>
<comment type="interaction">
    <interactant intactId="EBI-2808286">
        <id>Q2TAC2</id>
    </interactant>
    <interactant intactId="EBI-712912">
        <id>Q9HC52</id>
        <label>CBX8</label>
    </interactant>
    <organismsDiffer>false</organismsDiffer>
    <experiments>3</experiments>
</comment>
<comment type="interaction">
    <interactant intactId="EBI-2808286">
        <id>Q2TAC2</id>
    </interactant>
    <interactant intactId="EBI-10185348">
        <id>Q96HB5-4</id>
        <label>CCDC120</label>
    </interactant>
    <organismsDiffer>false</organismsDiffer>
    <experiments>3</experiments>
</comment>
<comment type="interaction">
    <interactant intactId="EBI-2808286">
        <id>Q2TAC2</id>
    </interactant>
    <interactant intactId="EBI-10260504">
        <id>Q86Y33</id>
        <label>CDC20B</label>
    </interactant>
    <organismsDiffer>false</organismsDiffer>
    <experiments>3</experiments>
</comment>
<comment type="interaction">
    <interactant intactId="EBI-2808286">
        <id>Q2TAC2</id>
    </interactant>
    <interactant intactId="EBI-10181988">
        <id>Q8IYX8-2</id>
        <label>CEP57L1</label>
    </interactant>
    <organismsDiffer>false</organismsDiffer>
    <experiments>3</experiments>
</comment>
<comment type="interaction">
    <interactant intactId="EBI-2808286">
        <id>Q2TAC2</id>
    </interactant>
    <interactant intactId="EBI-5453285">
        <id>Q2TBE0</id>
        <label>CWF19L2</label>
    </interactant>
    <organismsDiffer>false</organismsDiffer>
    <experiments>3</experiments>
</comment>
<comment type="interaction">
    <interactant intactId="EBI-2808286">
        <id>Q2TAC2</id>
    </interactant>
    <interactant intactId="EBI-719941">
        <id>Q3B820</id>
        <label>FAM161A</label>
    </interactant>
    <organismsDiffer>false</organismsDiffer>
    <experiments>3</experiments>
</comment>
<comment type="interaction">
    <interactant intactId="EBI-2808286">
        <id>Q2TAC2</id>
    </interactant>
    <interactant intactId="EBI-742802">
        <id>Q9Y247</id>
        <label>FAM50B</label>
    </interactant>
    <organismsDiffer>false</organismsDiffer>
    <experiments>3</experiments>
</comment>
<comment type="interaction">
    <interactant intactId="EBI-2808286">
        <id>Q2TAC2</id>
    </interactant>
    <interactant intactId="EBI-6658203">
        <id>Q86YD7</id>
        <label>FAM90A1</label>
    </interactant>
    <organismsDiffer>false</organismsDiffer>
    <experiments>3</experiments>
</comment>
<comment type="interaction">
    <interactant intactId="EBI-2808286">
        <id>Q2TAC2</id>
    </interactant>
    <interactant intactId="EBI-746309">
        <id>Q92917</id>
        <label>GPKOW</label>
    </interactant>
    <organismsDiffer>false</organismsDiffer>
    <experiments>3</experiments>
</comment>
<comment type="interaction">
    <interactant intactId="EBI-2808286">
        <id>Q2TAC2</id>
    </interactant>
    <interactant intactId="EBI-2514791">
        <id>Q96CS2</id>
        <label>HAUS1</label>
    </interactant>
    <organismsDiffer>false</organismsDiffer>
    <experiments>3</experiments>
</comment>
<comment type="interaction">
    <interactant intactId="EBI-2808286">
        <id>Q2TAC2</id>
    </interactant>
    <interactant intactId="EBI-714680">
        <id>P69905</id>
        <label>HBA2</label>
    </interactant>
    <organismsDiffer>false</organismsDiffer>
    <experiments>3</experiments>
</comment>
<comment type="interaction">
    <interactant intactId="EBI-2808286">
        <id>Q2TAC2</id>
    </interactant>
    <interactant intactId="EBI-726510">
        <id>Q96BZ8</id>
        <label>LENG1</label>
    </interactant>
    <organismsDiffer>false</organismsDiffer>
    <experiments>3</experiments>
</comment>
<comment type="interaction">
    <interactant intactId="EBI-2808286">
        <id>Q2TAC2</id>
    </interactant>
    <interactant intactId="EBI-10286106">
        <id>Q96FQ7</id>
        <label>LINC00526</label>
    </interactant>
    <organismsDiffer>false</organismsDiffer>
    <experiments>3</experiments>
</comment>
<comment type="interaction">
    <interactant intactId="EBI-2808286">
        <id>Q2TAC2</id>
    </interactant>
    <interactant intactId="EBI-1048159">
        <id>P55081</id>
        <label>MFAP1</label>
    </interactant>
    <organismsDiffer>false</organismsDiffer>
    <experiments>3</experiments>
</comment>
<comment type="interaction">
    <interactant intactId="EBI-2808286">
        <id>Q2TAC2</id>
    </interactant>
    <interactant intactId="EBI-10254820">
        <id>Q6XQN6-2</id>
        <label>NAPRT</label>
    </interactant>
    <organismsDiffer>false</organismsDiffer>
    <experiments>3</experiments>
</comment>
<comment type="interaction">
    <interactant intactId="EBI-2808286">
        <id>Q2TAC2</id>
    </interactant>
    <interactant intactId="EBI-348444">
        <id>P18615</id>
        <label>NELFE</label>
    </interactant>
    <organismsDiffer>false</organismsDiffer>
    <experiments>3</experiments>
</comment>
<comment type="interaction">
    <interactant intactId="EBI-2808286">
        <id>Q2TAC2</id>
    </interactant>
    <interactant intactId="EBI-521611">
        <id>Q14980</id>
        <label>NUMA1</label>
    </interactant>
    <organismsDiffer>false</organismsDiffer>
    <experiments>3</experiments>
</comment>
<comment type="interaction">
    <interactant intactId="EBI-2808286">
        <id>Q2TAC2</id>
    </interactant>
    <interactant intactId="EBI-474076">
        <id>Q8NEY8</id>
        <label>PPHLN1</label>
    </interactant>
    <organismsDiffer>false</organismsDiffer>
    <experiments>3</experiments>
</comment>
<comment type="interaction">
    <interactant intactId="EBI-2808286">
        <id>Q2TAC2</id>
    </interactant>
    <interactant intactId="EBI-2557469">
        <id>Q6NYC8</id>
        <label>PPP1R18</label>
    </interactant>
    <organismsDiffer>false</organismsDiffer>
    <experiments>3</experiments>
</comment>
<comment type="interaction">
    <interactant intactId="EBI-2808286">
        <id>Q2TAC2</id>
    </interactant>
    <interactant intactId="EBI-2860740">
        <id>Q96QH2</id>
        <label>PRAM1</label>
    </interactant>
    <organismsDiffer>false</organismsDiffer>
    <experiments>3</experiments>
</comment>
<comment type="interaction">
    <interactant intactId="EBI-2808286">
        <id>Q2TAC2</id>
    </interactant>
    <interactant intactId="EBI-1567797">
        <id>Q8WWY3</id>
        <label>PRPF31</label>
    </interactant>
    <organismsDiffer>false</organismsDiffer>
    <experiments>3</experiments>
</comment>
<comment type="interaction">
    <interactant intactId="EBI-2808286">
        <id>Q2TAC2</id>
    </interactant>
    <interactant intactId="EBI-2803328">
        <id>P79522</id>
        <label>PRR3</label>
    </interactant>
    <organismsDiffer>false</organismsDiffer>
    <experiments>3</experiments>
</comment>
<comment type="interaction">
    <interactant intactId="EBI-2808286">
        <id>Q2TAC2</id>
    </interactant>
    <interactant intactId="EBI-2265723">
        <id>P35236</id>
        <label>PTPN7</label>
    </interactant>
    <organismsDiffer>false</organismsDiffer>
    <experiments>3</experiments>
</comment>
<comment type="interaction">
    <interactant intactId="EBI-2808286">
        <id>Q2TAC2</id>
    </interactant>
    <interactant intactId="EBI-743796">
        <id>Q8TBN0</id>
        <label>RAB3IL1</label>
    </interactant>
    <organismsDiffer>false</organismsDiffer>
    <experiments>3</experiments>
</comment>
<comment type="interaction">
    <interactant intactId="EBI-2808286">
        <id>Q2TAC2</id>
    </interactant>
    <interactant intactId="EBI-10288358">
        <id>Q96HH0</id>
        <label>ROBO3</label>
    </interactant>
    <organismsDiffer>false</organismsDiffer>
    <experiments>3</experiments>
</comment>
<comment type="interaction">
    <interactant intactId="EBI-2808286">
        <id>Q2TAC2</id>
    </interactant>
    <interactant intactId="EBI-8787464">
        <id>Q9NU19</id>
        <label>TBC1D22B</label>
    </interactant>
    <organismsDiffer>false</organismsDiffer>
    <experiments>3</experiments>
</comment>
<comment type="interaction">
    <interactant intactId="EBI-2808286">
        <id>Q2TAC2</id>
    </interactant>
    <interactant intactId="EBI-717810">
        <id>Q08117</id>
        <label>TLE5</label>
    </interactant>
    <organismsDiffer>false</organismsDiffer>
    <experiments>3</experiments>
</comment>
<comment type="interaction">
    <interactant intactId="EBI-2808286">
        <id>Q2TAC2</id>
    </interactant>
    <interactant intactId="EBI-8644968">
        <id>Q9NV29</id>
        <label>TMEM100</label>
    </interactant>
    <organismsDiffer>false</organismsDiffer>
    <experiments>3</experiments>
</comment>
<comment type="interaction">
    <interactant intactId="EBI-2808286">
        <id>Q2TAC2</id>
    </interactant>
    <interactant intactId="EBI-10241197">
        <id>Q3SY00</id>
        <label>TSGA10IP</label>
    </interactant>
    <organismsDiffer>false</organismsDiffer>
    <experiments>3</experiments>
</comment>
<comment type="interaction">
    <interactant intactId="EBI-2808286">
        <id>Q2TAC2</id>
    </interactant>
    <interactant intactId="EBI-1043104">
        <id>Q9Y4E8</id>
        <label>USP15</label>
    </interactant>
    <organismsDiffer>false</organismsDiffer>
    <experiments>3</experiments>
</comment>
<comment type="interaction">
    <interactant intactId="EBI-2808286">
        <id>Q2TAC2</id>
    </interactant>
    <interactant intactId="EBI-743272">
        <id>O75604</id>
        <label>USP2</label>
    </interactant>
    <organismsDiffer>false</organismsDiffer>
    <experiments>3</experiments>
</comment>
<comment type="interaction">
    <interactant intactId="EBI-2808286">
        <id>Q2TAC2</id>
    </interactant>
    <interactant intactId="EBI-10225961">
        <id>Q08E77</id>
        <label>UTP14C</label>
    </interactant>
    <organismsDiffer>false</organismsDiffer>
    <experiments>3</experiments>
</comment>
<comment type="interaction">
    <interactant intactId="EBI-2808286">
        <id>Q2TAC2</id>
    </interactant>
    <interactant intactId="EBI-6448783">
        <id>G3V1X1</id>
        <label>ZFC3H1</label>
    </interactant>
    <organismsDiffer>false</organismsDiffer>
    <experiments>3</experiments>
</comment>
<comment type="interaction">
    <interactant intactId="EBI-2808286">
        <id>Q2TAC2</id>
    </interactant>
    <interactant intactId="EBI-3439227">
        <id>Q8N5A5</id>
        <label>ZGPAT</label>
    </interactant>
    <organismsDiffer>false</organismsDiffer>
    <experiments>3</experiments>
</comment>
<comment type="interaction">
    <interactant intactId="EBI-2808286">
        <id>Q2TAC2</id>
    </interactant>
    <interactant intactId="EBI-2682299">
        <id>Q96NC0</id>
        <label>ZMAT2</label>
    </interactant>
    <organismsDiffer>false</organismsDiffer>
    <experiments>3</experiments>
</comment>
<comment type="interaction">
    <interactant intactId="EBI-2808286">
        <id>Q2TAC2</id>
    </interactant>
    <interactant intactId="EBI-740727">
        <id>Q8TAU3</id>
        <label>ZNF417</label>
    </interactant>
    <organismsDiffer>false</organismsDiffer>
    <experiments>3</experiments>
</comment>
<comment type="interaction">
    <interactant intactId="EBI-2808286">
        <id>Q2TAC2</id>
    </interactant>
    <interactant intactId="EBI-25475920">
        <id>PRO_0000449631</id>
        <label>rep</label>
        <dbReference type="UniProtKB" id="P0DTD1"/>
    </interactant>
    <organismsDiffer>true</organismsDiffer>
    <experiments>3</experiments>
</comment>
<comment type="interaction">
    <interactant intactId="EBI-10961624">
        <id>Q2TAC2-2</id>
    </interactant>
    <interactant intactId="EBI-11743294">
        <id>Q8IZP0-5</id>
        <label>ABI1</label>
    </interactant>
    <organismsDiffer>false</organismsDiffer>
    <experiments>3</experiments>
</comment>
<comment type="interaction">
    <interactant intactId="EBI-10961624">
        <id>Q2TAC2-2</id>
    </interactant>
    <interactant intactId="EBI-11096309">
        <id>Q9NYB9-2</id>
        <label>ABI2</label>
    </interactant>
    <organismsDiffer>false</organismsDiffer>
    <experiments>3</experiments>
</comment>
<comment type="interaction">
    <interactant intactId="EBI-10961624">
        <id>Q2TAC2-2</id>
    </interactant>
    <interactant intactId="EBI-11030084">
        <id>O14639-4</id>
        <label>ABLIM1</label>
    </interactant>
    <organismsDiffer>false</organismsDiffer>
    <experiments>3</experiments>
</comment>
<comment type="interaction">
    <interactant intactId="EBI-10961624">
        <id>Q2TAC2-2</id>
    </interactant>
    <interactant intactId="EBI-746752">
        <id>Q9Y2J4</id>
        <label>AMOTL2</label>
    </interactant>
    <organismsDiffer>false</organismsDiffer>
    <experiments>3</experiments>
</comment>
<comment type="interaction">
    <interactant intactId="EBI-10961624">
        <id>Q2TAC2-2</id>
    </interactant>
    <interactant intactId="EBI-5661893">
        <id>Q86SG2</id>
        <label>ANKRD23</label>
    </interactant>
    <organismsDiffer>false</organismsDiffer>
    <experiments>3</experiments>
</comment>
<comment type="interaction">
    <interactant intactId="EBI-10961624">
        <id>Q2TAC2-2</id>
    </interactant>
    <interactant intactId="EBI-948603">
        <id>Q03989</id>
        <label>ARID5A</label>
    </interactant>
    <organismsDiffer>false</organismsDiffer>
    <experiments>3</experiments>
</comment>
<comment type="interaction">
    <interactant intactId="EBI-10961624">
        <id>Q2TAC2-2</id>
    </interactant>
    <interactant intactId="EBI-16429430">
        <id>A0A0S2Z4M1</id>
        <label>AXIN1</label>
    </interactant>
    <organismsDiffer>false</organismsDiffer>
    <experiments>3</experiments>
</comment>
<comment type="interaction">
    <interactant intactId="EBI-10961624">
        <id>Q2TAC2-2</id>
    </interactant>
    <interactant intactId="EBI-710484">
        <id>O15169</id>
        <label>AXIN1</label>
    </interactant>
    <organismsDiffer>false</organismsDiffer>
    <experiments>3</experiments>
</comment>
<comment type="interaction">
    <interactant intactId="EBI-10961624">
        <id>Q2TAC2-2</id>
    </interactant>
    <interactant intactId="EBI-702336">
        <id>O75815</id>
        <label>BCAR3</label>
    </interactant>
    <organismsDiffer>false</organismsDiffer>
    <experiments>3</experiments>
</comment>
<comment type="interaction">
    <interactant intactId="EBI-10961624">
        <id>Q2TAC2-2</id>
    </interactant>
    <interactant intactId="EBI-745073">
        <id>Q9BXY8</id>
        <label>BEX2</label>
    </interactant>
    <organismsDiffer>false</organismsDiffer>
    <experiments>3</experiments>
</comment>
<comment type="interaction">
    <interactant intactId="EBI-10961624">
        <id>Q2TAC2-2</id>
    </interactant>
    <interactant intactId="EBI-12061599">
        <id>Q9H6X5-2</id>
        <label>C19orf44</label>
    </interactant>
    <organismsDiffer>false</organismsDiffer>
    <experiments>3</experiments>
</comment>
<comment type="interaction">
    <interactant intactId="EBI-10961624">
        <id>Q2TAC2-2</id>
    </interactant>
    <interactant intactId="EBI-739879">
        <id>Q53TS8</id>
        <label>C2CD6</label>
    </interactant>
    <organismsDiffer>false</organismsDiffer>
    <experiments>3</experiments>
</comment>
<comment type="interaction">
    <interactant intactId="EBI-10961624">
        <id>Q2TAC2-2</id>
    </interactant>
    <interactant intactId="EBI-11524851">
        <id>Q8NA61-2</id>
        <label>CBY2</label>
    </interactant>
    <organismsDiffer>false</organismsDiffer>
    <experiments>3</experiments>
</comment>
<comment type="interaction">
    <interactant intactId="EBI-10961624">
        <id>Q2TAC2-2</id>
    </interactant>
    <interactant intactId="EBI-744556">
        <id>Q96HB5</id>
        <label>CCDC120</label>
    </interactant>
    <organismsDiffer>false</organismsDiffer>
    <experiments>3</experiments>
</comment>
<comment type="interaction">
    <interactant intactId="EBI-10961624">
        <id>Q2TAC2-2</id>
    </interactant>
    <interactant intactId="EBI-742422">
        <id>Q96M91</id>
        <label>CFAP53</label>
    </interactant>
    <organismsDiffer>false</organismsDiffer>
    <experiments>3</experiments>
</comment>
<comment type="interaction">
    <interactant intactId="EBI-10961624">
        <id>Q2TAC2-2</id>
    </interactant>
    <interactant intactId="EBI-945751">
        <id>P38432</id>
        <label>COIL</label>
    </interactant>
    <organismsDiffer>false</organismsDiffer>
    <experiments>3</experiments>
</comment>
<comment type="interaction">
    <interactant intactId="EBI-10961624">
        <id>Q2TAC2-2</id>
    </interactant>
    <interactant intactId="EBI-1181987">
        <id>Q53ET0</id>
        <label>CRTC2</label>
    </interactant>
    <organismsDiffer>false</organismsDiffer>
    <experiments>3</experiments>
</comment>
<comment type="interaction">
    <interactant intactId="EBI-10961624">
        <id>Q2TAC2-2</id>
    </interactant>
    <interactant intactId="EBI-12174057">
        <id>G5E9L9</id>
        <label>DCLK2</label>
    </interactant>
    <organismsDiffer>false</organismsDiffer>
    <experiments>3</experiments>
</comment>
<comment type="interaction">
    <interactant intactId="EBI-10961624">
        <id>Q2TAC2-2</id>
    </interactant>
    <interactant intactId="EBI-11988027">
        <id>Q9NRI5-2</id>
        <label>DISC1</label>
    </interactant>
    <organismsDiffer>false</organismsDiffer>
    <experiments>3</experiments>
</comment>
<comment type="interaction">
    <interactant intactId="EBI-10961624">
        <id>Q2TAC2-2</id>
    </interactant>
    <interactant intactId="EBI-740376">
        <id>Q86UW9</id>
        <label>DTX2</label>
    </interactant>
    <organismsDiffer>false</organismsDiffer>
    <experiments>3</experiments>
</comment>
<comment type="interaction">
    <interactant intactId="EBI-10961624">
        <id>Q2TAC2-2</id>
    </interactant>
    <interactant intactId="EBI-2349927">
        <id>Q5JST6</id>
        <label>EFHC2</label>
    </interactant>
    <organismsDiffer>false</organismsDiffer>
    <experiments>3</experiments>
</comment>
<comment type="interaction">
    <interactant intactId="EBI-10961624">
        <id>Q2TAC2-2</id>
    </interactant>
    <interactant intactId="EBI-353818">
        <id>O15371</id>
        <label>EIF3D</label>
    </interactant>
    <organismsDiffer>false</organismsDiffer>
    <experiments>3</experiments>
</comment>
<comment type="interaction">
    <interactant intactId="EBI-10961624">
        <id>Q2TAC2-2</id>
    </interactant>
    <interactant intactId="EBI-12012124">
        <id>Q04637-9</id>
        <label>EIF4G1</label>
    </interactant>
    <organismsDiffer>false</organismsDiffer>
    <experiments>3</experiments>
</comment>
<comment type="interaction">
    <interactant intactId="EBI-10961624">
        <id>Q2TAC2-2</id>
    </interactant>
    <interactant intactId="EBI-742350">
        <id>Q14241</id>
        <label>ELOA</label>
    </interactant>
    <organismsDiffer>false</organismsDiffer>
    <experiments>3</experiments>
</comment>
<comment type="interaction">
    <interactant intactId="EBI-10961624">
        <id>Q2TAC2-2</id>
    </interactant>
    <interactant intactId="EBI-3197883">
        <id>Q9NT22</id>
        <label>EMILIN3</label>
    </interactant>
    <organismsDiffer>false</organismsDiffer>
    <experiments>3</experiments>
</comment>
<comment type="interaction">
    <interactant intactId="EBI-10961624">
        <id>Q2TAC2-2</id>
    </interactant>
    <interactant intactId="EBI-3928124">
        <id>Q96DF8</id>
        <label>ESS2</label>
    </interactant>
    <organismsDiffer>false</organismsDiffer>
    <experiments>3</experiments>
</comment>
<comment type="interaction">
    <interactant intactId="EBI-10961624">
        <id>Q2TAC2-2</id>
    </interactant>
    <interactant intactId="EBI-11977223">
        <id>O95990-4</id>
        <label>FAM107A</label>
    </interactant>
    <organismsDiffer>false</organismsDiffer>
    <experiments>3</experiments>
</comment>
<comment type="interaction">
    <interactant intactId="EBI-10961624">
        <id>Q2TAC2-2</id>
    </interactant>
    <interactant intactId="EBI-719941">
        <id>Q3B820</id>
        <label>FAM161A</label>
    </interactant>
    <organismsDiffer>false</organismsDiffer>
    <experiments>6</experiments>
</comment>
<comment type="interaction">
    <interactant intactId="EBI-10961624">
        <id>Q2TAC2-2</id>
    </interactant>
    <interactant intactId="EBI-7225287">
        <id>Q96MY7</id>
        <label>FAM161B</label>
    </interactant>
    <organismsDiffer>false</organismsDiffer>
    <experiments>6</experiments>
</comment>
<comment type="interaction">
    <interactant intactId="EBI-10961624">
        <id>Q2TAC2-2</id>
    </interactant>
    <interactant intactId="EBI-12958227">
        <id>Q86W67</id>
        <label>FAM228A</label>
    </interactant>
    <organismsDiffer>false</organismsDiffer>
    <experiments>3</experiments>
</comment>
<comment type="interaction">
    <interactant intactId="EBI-10961624">
        <id>Q2TAC2-2</id>
    </interactant>
    <interactant intactId="EBI-6658203">
        <id>Q86YD7</id>
        <label>FAM90A1</label>
    </interactant>
    <organismsDiffer>false</organismsDiffer>
    <experiments>3</experiments>
</comment>
<comment type="interaction">
    <interactant intactId="EBI-10961624">
        <id>Q2TAC2-2</id>
    </interactant>
    <interactant intactId="EBI-1050358">
        <id>P07954</id>
        <label>FH</label>
    </interactant>
    <organismsDiffer>false</organismsDiffer>
    <experiments>3</experiments>
</comment>
<comment type="interaction">
    <interactant intactId="EBI-10961624">
        <id>Q2TAC2-2</id>
    </interactant>
    <interactant intactId="EBI-11320806">
        <id>Q9NU39</id>
        <label>FOXD4L1</label>
    </interactant>
    <organismsDiffer>false</organismsDiffer>
    <experiments>3</experiments>
</comment>
<comment type="interaction">
    <interactant intactId="EBI-10961624">
        <id>Q2TAC2-2</id>
    </interactant>
    <interactant intactId="EBI-18138793">
        <id>Q9C0B1-2</id>
        <label>FTO</label>
    </interactant>
    <organismsDiffer>false</organismsDiffer>
    <experiments>3</experiments>
</comment>
<comment type="interaction">
    <interactant intactId="EBI-10961624">
        <id>Q2TAC2-2</id>
    </interactant>
    <interactant intactId="EBI-744302">
        <id>P14136</id>
        <label>GFAP</label>
    </interactant>
    <organismsDiffer>false</organismsDiffer>
    <experiments>3</experiments>
</comment>
<comment type="interaction">
    <interactant intactId="EBI-10961624">
        <id>Q2TAC2-2</id>
    </interactant>
    <interactant intactId="EBI-947774">
        <id>O75420</id>
        <label>GIGYF1</label>
    </interactant>
    <organismsDiffer>false</organismsDiffer>
    <experiments>3</experiments>
</comment>
<comment type="interaction">
    <interactant intactId="EBI-10961624">
        <id>Q2TAC2-2</id>
    </interactant>
    <interactant intactId="EBI-2349758">
        <id>Q86WP2</id>
        <label>GPBP1</label>
    </interactant>
    <organismsDiffer>false</organismsDiffer>
    <experiments>3</experiments>
</comment>
<comment type="interaction">
    <interactant intactId="EBI-10961624">
        <id>Q2TAC2-2</id>
    </interactant>
    <interactant intactId="EBI-1043499">
        <id>Q9HAV7</id>
        <label>GRPEL1</label>
    </interactant>
    <organismsDiffer>false</organismsDiffer>
    <experiments>3</experiments>
</comment>
<comment type="interaction">
    <interactant intactId="EBI-10961624">
        <id>Q2TAC2-2</id>
    </interactant>
    <interactant intactId="EBI-1052734">
        <id>Q7Z353</id>
        <label>HDX</label>
    </interactant>
    <organismsDiffer>false</organismsDiffer>
    <experiments>3</experiments>
</comment>
<comment type="interaction">
    <interactant intactId="EBI-10961624">
        <id>Q2TAC2-2</id>
    </interactant>
    <interactant intactId="EBI-8638439">
        <id>Q8IYA8</id>
        <label>IHO1</label>
    </interactant>
    <organismsDiffer>false</organismsDiffer>
    <experiments>3</experiments>
</comment>
<comment type="interaction">
    <interactant intactId="EBI-10961624">
        <id>Q2TAC2-2</id>
    </interactant>
    <interactant intactId="EBI-747204">
        <id>Q9UKT9</id>
        <label>IKZF3</label>
    </interactant>
    <organismsDiffer>false</organismsDiffer>
    <experiments>5</experiments>
</comment>
<comment type="interaction">
    <interactant intactId="EBI-10961624">
        <id>Q2TAC2-2</id>
    </interactant>
    <interactant intactId="EBI-6509505">
        <id>Q0VD86</id>
        <label>INCA1</label>
    </interactant>
    <organismsDiffer>false</organismsDiffer>
    <experiments>3</experiments>
</comment>
<comment type="interaction">
    <interactant intactId="EBI-10961624">
        <id>Q2TAC2-2</id>
    </interactant>
    <interactant intactId="EBI-8471507">
        <id>Q9H0H0</id>
        <label>INTS2</label>
    </interactant>
    <organismsDiffer>false</organismsDiffer>
    <experiments>3</experiments>
</comment>
<comment type="interaction">
    <interactant intactId="EBI-10961624">
        <id>Q2TAC2-2</id>
    </interactant>
    <interactant intactId="EBI-17181882">
        <id>O75564-2</id>
        <label>JRK</label>
    </interactant>
    <organismsDiffer>false</organismsDiffer>
    <experiments>3</experiments>
</comment>
<comment type="interaction">
    <interactant intactId="EBI-10961624">
        <id>Q2TAC2-2</id>
    </interactant>
    <interactant intactId="EBI-2556193">
        <id>Q63ZY3</id>
        <label>KANK2</label>
    </interactant>
    <organismsDiffer>false</organismsDiffer>
    <experiments>3</experiments>
</comment>
<comment type="interaction">
    <interactant intactId="EBI-10961624">
        <id>Q2TAC2-2</id>
    </interactant>
    <interactant intactId="EBI-739493">
        <id>Q6ZU52</id>
        <label>KIAA0408</label>
    </interactant>
    <organismsDiffer>false</organismsDiffer>
    <experiments>3</experiments>
</comment>
<comment type="interaction">
    <interactant intactId="EBI-10961624">
        <id>Q2TAC2-2</id>
    </interactant>
    <interactant intactId="EBI-8284732">
        <id>Q13351</id>
        <label>KLF1</label>
    </interactant>
    <organismsDiffer>false</organismsDiffer>
    <experiments>3</experiments>
</comment>
<comment type="interaction">
    <interactant intactId="EBI-10961624">
        <id>Q2TAC2-2</id>
    </interactant>
    <interactant intactId="EBI-2796400">
        <id>Q9UIH9</id>
        <label>KLF15</label>
    </interactant>
    <organismsDiffer>false</organismsDiffer>
    <experiments>3</experiments>
</comment>
<comment type="interaction">
    <interactant intactId="EBI-10961624">
        <id>Q2TAC2-2</id>
    </interactant>
    <interactant intactId="EBI-10981970">
        <id>Q5T749</id>
        <label>KPRP</label>
    </interactant>
    <organismsDiffer>false</organismsDiffer>
    <experiments>3</experiments>
</comment>
<comment type="interaction">
    <interactant intactId="EBI-10961624">
        <id>Q2TAC2-2</id>
    </interactant>
    <interactant intactId="EBI-2371606">
        <id>P19013</id>
        <label>KRT4</label>
    </interactant>
    <organismsDiffer>false</organismsDiffer>
    <experiments>3</experiments>
</comment>
<comment type="interaction">
    <interactant intactId="EBI-10961624">
        <id>Q2TAC2-2</id>
    </interactant>
    <interactant intactId="EBI-2952745">
        <id>Q01546</id>
        <label>KRT76</label>
    </interactant>
    <organismsDiffer>false</organismsDiffer>
    <experiments>3</experiments>
</comment>
<comment type="interaction">
    <interactant intactId="EBI-10961624">
        <id>Q2TAC2-2</id>
    </interactant>
    <interactant intactId="EBI-11953846">
        <id>Q52LG2</id>
        <label>KRTAP13-2</label>
    </interactant>
    <organismsDiffer>false</organismsDiffer>
    <experiments>3</experiments>
</comment>
<comment type="interaction">
    <interactant intactId="EBI-10961624">
        <id>Q2TAC2-2</id>
    </interactant>
    <interactant intactId="EBI-10241252">
        <id>Q3SY46</id>
        <label>KRTAP13-3</label>
    </interactant>
    <organismsDiffer>false</organismsDiffer>
    <experiments>3</experiments>
</comment>
<comment type="interaction">
    <interactant intactId="EBI-10961624">
        <id>Q2TAC2-2</id>
    </interactant>
    <interactant intactId="EBI-726510">
        <id>Q96BZ8</id>
        <label>LENG1</label>
    </interactant>
    <organismsDiffer>false</organismsDiffer>
    <experiments>3</experiments>
</comment>
<comment type="interaction">
    <interactant intactId="EBI-10961624">
        <id>Q2TAC2-2</id>
    </interactant>
    <interactant intactId="EBI-1216080">
        <id>Q9Y250</id>
        <label>LZTS1</label>
    </interactant>
    <organismsDiffer>false</organismsDiffer>
    <experiments>3</experiments>
</comment>
<comment type="interaction">
    <interactant intactId="EBI-10961624">
        <id>Q2TAC2-2</id>
    </interactant>
    <interactant intactId="EBI-742610">
        <id>Q9Y6D9</id>
        <label>MAD1L1</label>
    </interactant>
    <organismsDiffer>false</organismsDiffer>
    <experiments>3</experiments>
</comment>
<comment type="interaction">
    <interactant intactId="EBI-10961624">
        <id>Q2TAC2-2</id>
    </interactant>
    <interactant intactId="EBI-3951677">
        <id>Q8TC05</id>
        <label>MDM1</label>
    </interactant>
    <organismsDiffer>false</organismsDiffer>
    <experiments>3</experiments>
</comment>
<comment type="interaction">
    <interactant intactId="EBI-10961624">
        <id>Q2TAC2-2</id>
    </interactant>
    <interactant intactId="EBI-12310079">
        <id>P04732</id>
        <label>MT1E</label>
    </interactant>
    <organismsDiffer>false</organismsDiffer>
    <experiments>3</experiments>
</comment>
<comment type="interaction">
    <interactant intactId="EBI-10961624">
        <id>Q2TAC2-2</id>
    </interactant>
    <interactant intactId="EBI-5662487">
        <id>Q8TDC0</id>
        <label>MYOZ3</label>
    </interactant>
    <organismsDiffer>false</organismsDiffer>
    <experiments>3</experiments>
</comment>
<comment type="interaction">
    <interactant intactId="EBI-10961624">
        <id>Q2TAC2-2</id>
    </interactant>
    <interactant intactId="EBI-8641936">
        <id>Q15742</id>
        <label>NAB2</label>
    </interactant>
    <organismsDiffer>false</organismsDiffer>
    <experiments>3</experiments>
</comment>
<comment type="interaction">
    <interactant intactId="EBI-10961624">
        <id>Q2TAC2-2</id>
    </interactant>
    <interactant intactId="EBI-744871">
        <id>O00746</id>
        <label>NME4</label>
    </interactant>
    <organismsDiffer>false</organismsDiffer>
    <experiments>5</experiments>
</comment>
<comment type="interaction">
    <interactant intactId="EBI-10961624">
        <id>Q2TAC2-2</id>
    </interactant>
    <interactant intactId="EBI-741896">
        <id>Q9P286</id>
        <label>PAK5</label>
    </interactant>
    <organismsDiffer>false</organismsDiffer>
    <experiments>3</experiments>
</comment>
<comment type="interaction">
    <interactant intactId="EBI-10961624">
        <id>Q2TAC2-2</id>
    </interactant>
    <interactant intactId="EBI-11956563">
        <id>Q96HA1-2</id>
        <label>POM121</label>
    </interactant>
    <organismsDiffer>false</organismsDiffer>
    <experiments>3</experiments>
</comment>
<comment type="interaction">
    <interactant intactId="EBI-10961624">
        <id>Q2TAC2-2</id>
    </interactant>
    <interactant intactId="EBI-2860740">
        <id>Q96QH2</id>
        <label>PRAM1</label>
    </interactant>
    <organismsDiffer>false</organismsDiffer>
    <experiments>3</experiments>
</comment>
<comment type="interaction">
    <interactant intactId="EBI-10961624">
        <id>Q2TAC2-2</id>
    </interactant>
    <interactant intactId="EBI-11320284">
        <id>Q9NQX0</id>
        <label>PRDM6</label>
    </interactant>
    <organismsDiffer>false</organismsDiffer>
    <experiments>3</experiments>
</comment>
<comment type="interaction">
    <interactant intactId="EBI-10961624">
        <id>Q2TAC2-2</id>
    </interactant>
    <interactant intactId="EBI-11336487">
        <id>Q2NL68</id>
        <label>PROSER3</label>
    </interactant>
    <organismsDiffer>false</organismsDiffer>
    <experiments>3</experiments>
</comment>
<comment type="interaction">
    <interactant intactId="EBI-10961624">
        <id>Q2TAC2-2</id>
    </interactant>
    <interactant intactId="EBI-2798416">
        <id>Q99633</id>
        <label>PRPF18</label>
    </interactant>
    <organismsDiffer>false</organismsDiffer>
    <experiments>3</experiments>
</comment>
<comment type="interaction">
    <interactant intactId="EBI-10961624">
        <id>Q2TAC2-2</id>
    </interactant>
    <interactant intactId="EBI-1567797">
        <id>Q8WWY3</id>
        <label>PRPF31</label>
    </interactant>
    <organismsDiffer>false</organismsDiffer>
    <experiments>6</experiments>
</comment>
<comment type="interaction">
    <interactant intactId="EBI-10961624">
        <id>Q2TAC2-2</id>
    </interactant>
    <interactant intactId="EBI-603350">
        <id>P28070</id>
        <label>PSMB4</label>
    </interactant>
    <organismsDiffer>false</organismsDiffer>
    <experiments>3</experiments>
</comment>
<comment type="interaction">
    <interactant intactId="EBI-10961624">
        <id>Q2TAC2-2</id>
    </interactant>
    <interactant intactId="EBI-2860313">
        <id>Q3KNS1</id>
        <label>PTCHD3</label>
    </interactant>
    <organismsDiffer>false</organismsDiffer>
    <experiments>3</experiments>
</comment>
<comment type="interaction">
    <interactant intactId="EBI-10961624">
        <id>Q2TAC2-2</id>
    </interactant>
    <interactant intactId="EBI-740818">
        <id>Q9Y272</id>
        <label>RASD1</label>
    </interactant>
    <organismsDiffer>false</organismsDiffer>
    <experiments>3</experiments>
</comment>
<comment type="interaction">
    <interactant intactId="EBI-10961624">
        <id>Q2TAC2-2</id>
    </interactant>
    <interactant intactId="EBI-473821">
        <id>Q5RL73</id>
        <label>RBM48</label>
    </interactant>
    <organismsDiffer>false</organismsDiffer>
    <experiments>3</experiments>
</comment>
<comment type="interaction">
    <interactant intactId="EBI-10961624">
        <id>Q2TAC2-2</id>
    </interactant>
    <interactant intactId="EBI-10288724">
        <id>Q8NG50</id>
        <label>RDM1</label>
    </interactant>
    <organismsDiffer>false</organismsDiffer>
    <experiments>5</experiments>
</comment>
<comment type="interaction">
    <interactant intactId="EBI-10961624">
        <id>Q2TAC2-2</id>
    </interactant>
    <interactant intactId="EBI-726876">
        <id>Q6NUQ1</id>
        <label>RINT1</label>
    </interactant>
    <organismsDiffer>false</organismsDiffer>
    <experiments>3</experiments>
</comment>
<comment type="interaction">
    <interactant intactId="EBI-10961624">
        <id>Q2TAC2-2</id>
    </interactant>
    <interactant intactId="EBI-16428950">
        <id>A0A0S2Z4G9</id>
        <label>RNF6</label>
    </interactant>
    <organismsDiffer>false</organismsDiffer>
    <experiments>3</experiments>
</comment>
<comment type="interaction">
    <interactant intactId="EBI-10961624">
        <id>Q2TAC2-2</id>
    </interactant>
    <interactant intactId="EBI-10288358">
        <id>Q96HH0</id>
        <label>ROBO3</label>
    </interactant>
    <organismsDiffer>false</organismsDiffer>
    <experiments>3</experiments>
</comment>
<comment type="interaction">
    <interactant intactId="EBI-10961624">
        <id>Q2TAC2-2</id>
    </interactant>
    <interactant intactId="EBI-6257312">
        <id>Q9BVN2</id>
        <label>RUSC1</label>
    </interactant>
    <organismsDiffer>false</organismsDiffer>
    <experiments>3</experiments>
</comment>
<comment type="interaction">
    <interactant intactId="EBI-10961624">
        <id>Q2TAC2-2</id>
    </interactant>
    <interactant intactId="EBI-12000762">
        <id>Q7Z5V6-2</id>
        <label>SAXO4</label>
    </interactant>
    <organismsDiffer>false</organismsDiffer>
    <experiments>3</experiments>
</comment>
<comment type="interaction">
    <interactant intactId="EBI-10961624">
        <id>Q2TAC2-2</id>
    </interactant>
    <interactant intactId="EBI-346595">
        <id>Q96B97</id>
        <label>SH3KBP1</label>
    </interactant>
    <organismsDiffer>false</organismsDiffer>
    <experiments>3</experiments>
</comment>
<comment type="interaction">
    <interactant intactId="EBI-10961624">
        <id>Q2TAC2-2</id>
    </interactant>
    <interactant intactId="EBI-12037847">
        <id>Q6ZSJ9</id>
        <label>SHISA6</label>
    </interactant>
    <organismsDiffer>false</organismsDiffer>
    <experiments>3</experiments>
</comment>
<comment type="interaction">
    <interactant intactId="EBI-10961624">
        <id>Q2TAC2-2</id>
    </interactant>
    <interactant intactId="EBI-12065614">
        <id>Q6ZT89-3</id>
        <label>SLC25A48</label>
    </interactant>
    <organismsDiffer>false</organismsDiffer>
    <experiments>3</experiments>
</comment>
<comment type="interaction">
    <interactant intactId="EBI-10961624">
        <id>Q2TAC2-2</id>
    </interactant>
    <interactant intactId="EBI-2872322">
        <id>Q9H0W8</id>
        <label>SMG9</label>
    </interactant>
    <organismsDiffer>false</organismsDiffer>
    <experiments>3</experiments>
</comment>
<comment type="interaction">
    <interactant intactId="EBI-10961624">
        <id>Q2TAC2-2</id>
    </interactant>
    <interactant intactId="EBI-12938570">
        <id>Q16560-2</id>
        <label>SNRNP35</label>
    </interactant>
    <organismsDiffer>false</organismsDiffer>
    <experiments>3</experiments>
</comment>
<comment type="interaction">
    <interactant intactId="EBI-10961624">
        <id>Q2TAC2-2</id>
    </interactant>
    <interactant intactId="EBI-741237">
        <id>O60504</id>
        <label>SORBS3</label>
    </interactant>
    <organismsDiffer>false</organismsDiffer>
    <experiments>3</experiments>
</comment>
<comment type="interaction">
    <interactant intactId="EBI-10961624">
        <id>Q2TAC2-2</id>
    </interactant>
    <interactant intactId="EBI-12020542">
        <id>Q96LM5</id>
        <label>SPMIP2</label>
    </interactant>
    <organismsDiffer>false</organismsDiffer>
    <experiments>3</experiments>
</comment>
<comment type="interaction">
    <interactant intactId="EBI-10961624">
        <id>Q2TAC2-2</id>
    </interactant>
    <interactant intactId="EBI-10269322">
        <id>Q8NCR6</id>
        <label>SPMIP6</label>
    </interactant>
    <organismsDiffer>false</organismsDiffer>
    <experiments>3</experiments>
</comment>
<comment type="interaction">
    <interactant intactId="EBI-10961624">
        <id>Q2TAC2-2</id>
    </interactant>
    <interactant intactId="EBI-3866665">
        <id>O43609</id>
        <label>SPRY1</label>
    </interactant>
    <organismsDiffer>false</organismsDiffer>
    <experiments>3</experiments>
</comment>
<comment type="interaction">
    <interactant intactId="EBI-10961624">
        <id>Q2TAC2-2</id>
    </interactant>
    <interactant intactId="EBI-10246152">
        <id>Q5T7P8-2</id>
        <label>SYT6</label>
    </interactant>
    <organismsDiffer>false</organismsDiffer>
    <experiments>3</experiments>
</comment>
<comment type="interaction">
    <interactant intactId="EBI-10961624">
        <id>Q2TAC2-2</id>
    </interactant>
    <interactant intactId="EBI-3923210">
        <id>Q8TDR4</id>
        <label>TCP10L</label>
    </interactant>
    <organismsDiffer>false</organismsDiffer>
    <experiments>3</experiments>
</comment>
<comment type="interaction">
    <interactant intactId="EBI-10961624">
        <id>Q2TAC2-2</id>
    </interactant>
    <interactant intactId="EBI-1105213">
        <id>Q9UBB9</id>
        <label>TFIP11</label>
    </interactant>
    <organismsDiffer>false</organismsDiffer>
    <experiments>3</experiments>
</comment>
<comment type="interaction">
    <interactant intactId="EBI-10961624">
        <id>Q2TAC2-2</id>
    </interactant>
    <interactant intactId="EBI-1245626">
        <id>P0C1Z6</id>
        <label>TFPT</label>
    </interactant>
    <organismsDiffer>false</organismsDiffer>
    <experiments>3</experiments>
</comment>
<comment type="interaction">
    <interactant intactId="EBI-10961624">
        <id>Q2TAC2-2</id>
    </interactant>
    <interactant intactId="EBI-861737">
        <id>O43615</id>
        <label>TIMM44</label>
    </interactant>
    <organismsDiffer>false</organismsDiffer>
    <experiments>3</experiments>
</comment>
<comment type="interaction">
    <interactant intactId="EBI-10961624">
        <id>Q2TAC2-2</id>
    </interactant>
    <interactant intactId="EBI-8644968">
        <id>Q9NV29</id>
        <label>TMEM100</label>
    </interactant>
    <organismsDiffer>false</organismsDiffer>
    <experiments>3</experiments>
</comment>
<comment type="interaction">
    <interactant intactId="EBI-10961624">
        <id>Q2TAC2-2</id>
    </interactant>
    <interactant intactId="EBI-746692">
        <id>P19237</id>
        <label>TNNI1</label>
    </interactant>
    <organismsDiffer>false</organismsDiffer>
    <experiments>3</experiments>
</comment>
<comment type="interaction">
    <interactant intactId="EBI-10961624">
        <id>Q2TAC2-2</id>
    </interactant>
    <interactant intactId="EBI-11952721">
        <id>Q05BL1</id>
        <label>TP53BP2</label>
    </interactant>
    <organismsDiffer>false</organismsDiffer>
    <experiments>3</experiments>
</comment>
<comment type="interaction">
    <interactant intactId="EBI-10961624">
        <id>Q2TAC2-2</id>
    </interactant>
    <interactant intactId="EBI-2820256">
        <id>Q14142</id>
        <label>TRIM14</label>
    </interactant>
    <organismsDiffer>false</organismsDiffer>
    <experiments>3</experiments>
</comment>
<comment type="interaction">
    <interactant intactId="EBI-10961624">
        <id>Q2TAC2-2</id>
    </interactant>
    <interactant intactId="EBI-702370">
        <id>Q14134</id>
        <label>TRIM29</label>
    </interactant>
    <organismsDiffer>false</organismsDiffer>
    <experiments>6</experiments>
</comment>
<comment type="interaction">
    <interactant intactId="EBI-10961624">
        <id>Q2TAC2-2</id>
    </interactant>
    <interactant intactId="EBI-2559824">
        <id>Q7Z6J9</id>
        <label>TSEN54</label>
    </interactant>
    <organismsDiffer>false</organismsDiffer>
    <experiments>3</experiments>
</comment>
<comment type="interaction">
    <interactant intactId="EBI-10961624">
        <id>Q2TAC2-2</id>
    </interactant>
    <interactant intactId="EBI-10241197">
        <id>Q3SY00</id>
        <label>TSGA10IP</label>
    </interactant>
    <organismsDiffer>false</organismsDiffer>
    <experiments>3</experiments>
</comment>
<comment type="interaction">
    <interactant intactId="EBI-10961624">
        <id>Q2TAC2-2</id>
    </interactant>
    <interactant intactId="EBI-10687282">
        <id>Q9NRE2</id>
        <label>TSHZ2</label>
    </interactant>
    <organismsDiffer>false</organismsDiffer>
    <experiments>3</experiments>
</comment>
<comment type="interaction">
    <interactant intactId="EBI-10961624">
        <id>Q2TAC2-2</id>
    </interactant>
    <interactant intactId="EBI-359793">
        <id>P40222</id>
        <label>TXLNA</label>
    </interactant>
    <organismsDiffer>false</organismsDiffer>
    <experiments>3</experiments>
</comment>
<comment type="interaction">
    <interactant intactId="EBI-10961624">
        <id>Q2TAC2-2</id>
    </interactant>
    <interactant intactId="EBI-2799833">
        <id>Q8N1B4</id>
        <label>VPS52</label>
    </interactant>
    <organismsDiffer>false</organismsDiffer>
    <experiments>3</experiments>
</comment>
<comment type="interaction">
    <interactant intactId="EBI-10961624">
        <id>Q2TAC2-2</id>
    </interactant>
    <interactant intactId="EBI-10300345">
        <id>Q9BW85</id>
        <label>YJU2</label>
    </interactant>
    <organismsDiffer>false</organismsDiffer>
    <experiments>3</experiments>
</comment>
<comment type="interaction">
    <interactant intactId="EBI-10961624">
        <id>Q2TAC2-2</id>
    </interactant>
    <interactant intactId="EBI-2564133">
        <id>Q9P1Z0</id>
        <label>ZBTB4</label>
    </interactant>
    <organismsDiffer>false</organismsDiffer>
    <experiments>3</experiments>
</comment>
<comment type="interaction">
    <interactant intactId="EBI-10961624">
        <id>Q2TAC2-2</id>
    </interactant>
    <interactant intactId="EBI-14104088">
        <id>Q53FD0-2</id>
        <label>ZC2HC1C</label>
    </interactant>
    <organismsDiffer>false</organismsDiffer>
    <experiments>3</experiments>
</comment>
<comment type="interaction">
    <interactant intactId="EBI-10961624">
        <id>Q2TAC2-2</id>
    </interactant>
    <interactant intactId="EBI-10183064">
        <id>Q8N5A5-2</id>
        <label>ZGPAT</label>
    </interactant>
    <organismsDiffer>false</organismsDiffer>
    <experiments>3</experiments>
</comment>
<comment type="interaction">
    <interactant intactId="EBI-10961624">
        <id>Q2TAC2-2</id>
    </interactant>
    <interactant intactId="EBI-8489702">
        <id>Q9C0F3</id>
        <label>ZNF436</label>
    </interactant>
    <organismsDiffer>false</organismsDiffer>
    <experiments>3</experiments>
</comment>
<comment type="interaction">
    <interactant intactId="EBI-10961624">
        <id>Q2TAC2-2</id>
    </interactant>
    <interactant intactId="EBI-17269964">
        <id>Q6S9Z5</id>
        <label>ZNF474</label>
    </interactant>
    <organismsDiffer>false</organismsDiffer>
    <experiments>3</experiments>
</comment>
<comment type="interaction">
    <interactant intactId="EBI-10961624">
        <id>Q2TAC2-2</id>
    </interactant>
    <interactant intactId="EBI-2555731">
        <id>Q9H707</id>
        <label>ZNF552</label>
    </interactant>
    <organismsDiffer>false</organismsDiffer>
    <experiments>3</experiments>
</comment>
<comment type="interaction">
    <interactant intactId="EBI-10961624">
        <id>Q2TAC2-2</id>
    </interactant>
    <interactant intactId="EBI-11985915">
        <id>Q5T619</id>
        <label>ZNF648</label>
    </interactant>
    <organismsDiffer>false</organismsDiffer>
    <experiments>3</experiments>
</comment>
<comment type="interaction">
    <interactant intactId="EBI-10961624">
        <id>Q2TAC2-2</id>
    </interactant>
    <interactant intactId="EBI-625509">
        <id>Q8N720</id>
        <label>ZNF655</label>
    </interactant>
    <organismsDiffer>false</organismsDiffer>
    <experiments>3</experiments>
</comment>
<comment type="interaction">
    <interactant intactId="EBI-10961624">
        <id>Q2TAC2-2</id>
    </interactant>
    <interactant intactId="EBI-16429014">
        <id>A0A0S2Z5X4</id>
        <label>ZNF688</label>
    </interactant>
    <organismsDiffer>false</organismsDiffer>
    <experiments>3</experiments>
</comment>
<comment type="interaction">
    <interactant intactId="EBI-10961624">
        <id>Q2TAC2-2</id>
    </interactant>
    <interactant intactId="EBI-5667516">
        <id>Q9Y2P0</id>
        <label>ZNF835</label>
    </interactant>
    <organismsDiffer>false</organismsDiffer>
    <experiments>3</experiments>
</comment>
<comment type="interaction">
    <interactant intactId="EBI-10961624">
        <id>Q2TAC2-2</id>
    </interactant>
    <interactant intactId="EBI-5235554">
        <id>Q96MP5</id>
        <label>ZSWIM3</label>
    </interactant>
    <organismsDiffer>false</organismsDiffer>
    <experiments>3</experiments>
</comment>
<comment type="subcellular location">
    <subcellularLocation>
        <location evidence="4">Cytoplasm</location>
        <location evidence="4">Cytoskeleton</location>
        <location evidence="4">Microtubule organizing center</location>
        <location evidence="4">Centrosome</location>
    </subcellularLocation>
    <subcellularLocation>
        <location evidence="4">Cytoplasm</location>
        <location evidence="4">Cytoskeleton</location>
        <location evidence="4">Microtubule organizing center</location>
        <location evidence="4">Centrosome</location>
        <location evidence="4">Centriolar satellite</location>
    </subcellularLocation>
    <subcellularLocation>
        <location evidence="4">Cytoplasm</location>
        <location evidence="4">Cytoskeleton</location>
        <location evidence="4">Microtubule organizing center</location>
        <location evidence="4">Centrosome</location>
        <location evidence="4">Centriole</location>
    </subcellularLocation>
    <subcellularLocation>
        <location evidence="4">Cytoplasm</location>
        <location evidence="4">Cytoskeleton</location>
        <location evidence="4">Spindle</location>
    </subcellularLocation>
    <text evidence="4">Localizes to resolvable rings at the proximal end of centrioles (PubMed:32402286). In mitotic cells, localizes to spindle microtubules during metaphase (PubMed:32402286).</text>
</comment>
<comment type="alternative products">
    <event type="alternative splicing"/>
    <isoform>
        <id>Q2TAC2-1</id>
        <name>1</name>
        <sequence type="displayed"/>
    </isoform>
    <isoform>
        <id>Q2TAC2-2</id>
        <name>2</name>
        <sequence type="described" ref="VSP_025802 VSP_025803"/>
    </isoform>
</comment>
<comment type="sequence caution" evidence="7">
    <conflict type="miscellaneous discrepancy">
        <sequence resource="EMBL-CDS" id="AAI10998"/>
    </conflict>
    <text>Aberrant splicing.</text>
</comment>
<comment type="sequence caution" evidence="7">
    <conflict type="erroneous gene model prediction">
        <sequence resource="EMBL-CDS" id="EAW89746"/>
    </conflict>
</comment>
<organism>
    <name type="scientific">Homo sapiens</name>
    <name type="common">Human</name>
    <dbReference type="NCBI Taxonomy" id="9606"/>
    <lineage>
        <taxon>Eukaryota</taxon>
        <taxon>Metazoa</taxon>
        <taxon>Chordata</taxon>
        <taxon>Craniata</taxon>
        <taxon>Vertebrata</taxon>
        <taxon>Euteleostomi</taxon>
        <taxon>Mammalia</taxon>
        <taxon>Eutheria</taxon>
        <taxon>Euarchontoglires</taxon>
        <taxon>Primates</taxon>
        <taxon>Haplorrhini</taxon>
        <taxon>Catarrhini</taxon>
        <taxon>Hominidae</taxon>
        <taxon>Homo</taxon>
    </lineage>
</organism>